<keyword id="KW-0067">ATP-binding</keyword>
<keyword id="KW-1003">Cell membrane</keyword>
<keyword id="KW-0472">Membrane</keyword>
<keyword id="KW-0547">Nucleotide-binding</keyword>
<keyword id="KW-1278">Translocase</keyword>
<keyword id="KW-0813">Transport</keyword>
<proteinExistence type="inferred from homology"/>
<accession>Q8VNL9</accession>
<organism>
    <name type="scientific">Enterococcus faecium</name>
    <name type="common">Streptococcus faecium</name>
    <dbReference type="NCBI Taxonomy" id="1352"/>
    <lineage>
        <taxon>Bacteria</taxon>
        <taxon>Bacillati</taxon>
        <taxon>Bacillota</taxon>
        <taxon>Bacilli</taxon>
        <taxon>Lactobacillales</taxon>
        <taxon>Enterococcaceae</taxon>
        <taxon>Enterococcus</taxon>
    </lineage>
</organism>
<protein>
    <recommendedName>
        <fullName evidence="1">Energy-coupling factor transporter ATP-binding protein EcfA</fullName>
        <shortName evidence="1">ECF transporter A component EcfA</shortName>
        <ecNumber evidence="1">7.-.-.-</ecNumber>
    </recommendedName>
</protein>
<name>ECFA_ENTFC</name>
<feature type="chain" id="PRO_0000092010" description="Energy-coupling factor transporter ATP-binding protein EcfA">
    <location>
        <begin position="1"/>
        <end position="279"/>
    </location>
</feature>
<feature type="domain" description="ABC transporter" evidence="1">
    <location>
        <begin position="5"/>
        <end position="240"/>
    </location>
</feature>
<feature type="binding site" evidence="1">
    <location>
        <begin position="40"/>
        <end position="47"/>
    </location>
    <ligand>
        <name>ATP</name>
        <dbReference type="ChEBI" id="CHEBI:30616"/>
    </ligand>
</feature>
<sequence length="279" mass="31163">MEPIIELEKINYKYQPDDLRPALKDVSFTIDKGEWIAIIGHNGSGKSTLAKTINGLLLPESGIVKVGNQILDEENIWTIRQMVGMVFQNPDNQFVGSTVEDDVAFGLENQGIPREEMLVRVKDALEKVRMAEFASREPARLSGGQKQRVAIAGVVALRPDIIILDEATSMLDPEGREEVISTIKKIKEESQLTVISITHDIDEAANANRILVMRQGELVREGTPKEIFSAGPELIDLGLDLPFPEKLKSALKERGVDVPSEYMTEERMVDWLWTSVLNK</sequence>
<comment type="function">
    <text evidence="1">ATP-binding (A) component of a common energy-coupling factor (ECF) ABC-transporter complex. Unlike classic ABC transporters this ECF transporter provides the energy necessary to transport a number of different substrates.</text>
</comment>
<comment type="subunit">
    <text evidence="1">Forms a stable energy-coupling factor (ECF) transporter complex composed of 2 membrane-embedded substrate-binding proteins (S component), 2 ATP-binding proteins (A component) and 2 transmembrane proteins (T component).</text>
</comment>
<comment type="subcellular location">
    <subcellularLocation>
        <location evidence="1">Cell membrane</location>
        <topology evidence="1">Peripheral membrane protein</topology>
    </subcellularLocation>
</comment>
<comment type="similarity">
    <text evidence="1">Belongs to the ABC transporter superfamily. Energy-coupling factor EcfA family.</text>
</comment>
<gene>
    <name evidence="1" type="primary">ecfA</name>
    <name type="synonym">cbiO</name>
</gene>
<dbReference type="EC" id="7.-.-.-" evidence="1"/>
<dbReference type="EMBL" id="AJ428868">
    <property type="protein sequence ID" value="CAD21830.1"/>
    <property type="molecule type" value="Genomic_DNA"/>
</dbReference>
<dbReference type="RefSeq" id="WP_002288720.1">
    <property type="nucleotide sequence ID" value="NZ_WVTH01000008.1"/>
</dbReference>
<dbReference type="SMR" id="Q8VNL9"/>
<dbReference type="STRING" id="1352.AL014_11760"/>
<dbReference type="eggNOG" id="COG1122">
    <property type="taxonomic scope" value="Bacteria"/>
</dbReference>
<dbReference type="GO" id="GO:0043190">
    <property type="term" value="C:ATP-binding cassette (ABC) transporter complex"/>
    <property type="evidence" value="ECO:0007669"/>
    <property type="project" value="TreeGrafter"/>
</dbReference>
<dbReference type="GO" id="GO:0005524">
    <property type="term" value="F:ATP binding"/>
    <property type="evidence" value="ECO:0007669"/>
    <property type="project" value="UniProtKB-KW"/>
</dbReference>
<dbReference type="GO" id="GO:0016887">
    <property type="term" value="F:ATP hydrolysis activity"/>
    <property type="evidence" value="ECO:0007669"/>
    <property type="project" value="InterPro"/>
</dbReference>
<dbReference type="GO" id="GO:0042626">
    <property type="term" value="F:ATPase-coupled transmembrane transporter activity"/>
    <property type="evidence" value="ECO:0007669"/>
    <property type="project" value="TreeGrafter"/>
</dbReference>
<dbReference type="CDD" id="cd03225">
    <property type="entry name" value="ABC_cobalt_CbiO_domain1"/>
    <property type="match status" value="1"/>
</dbReference>
<dbReference type="FunFam" id="3.40.50.300:FF:000224">
    <property type="entry name" value="Energy-coupling factor transporter ATP-binding protein EcfA"/>
    <property type="match status" value="1"/>
</dbReference>
<dbReference type="Gene3D" id="3.40.50.300">
    <property type="entry name" value="P-loop containing nucleotide triphosphate hydrolases"/>
    <property type="match status" value="1"/>
</dbReference>
<dbReference type="InterPro" id="IPR003593">
    <property type="entry name" value="AAA+_ATPase"/>
</dbReference>
<dbReference type="InterPro" id="IPR003439">
    <property type="entry name" value="ABC_transporter-like_ATP-bd"/>
</dbReference>
<dbReference type="InterPro" id="IPR017871">
    <property type="entry name" value="ABC_transporter-like_CS"/>
</dbReference>
<dbReference type="InterPro" id="IPR015856">
    <property type="entry name" value="ABC_transpr_CbiO/EcfA_su"/>
</dbReference>
<dbReference type="InterPro" id="IPR050095">
    <property type="entry name" value="ECF_ABC_transporter_ATP-bd"/>
</dbReference>
<dbReference type="InterPro" id="IPR030947">
    <property type="entry name" value="EcfA_1"/>
</dbReference>
<dbReference type="InterPro" id="IPR027417">
    <property type="entry name" value="P-loop_NTPase"/>
</dbReference>
<dbReference type="NCBIfam" id="TIGR04520">
    <property type="entry name" value="ECF_ATPase_1"/>
    <property type="match status" value="1"/>
</dbReference>
<dbReference type="NCBIfam" id="NF010156">
    <property type="entry name" value="PRK13635.1"/>
    <property type="match status" value="1"/>
</dbReference>
<dbReference type="NCBIfam" id="NF010167">
    <property type="entry name" value="PRK13648.1"/>
    <property type="match status" value="1"/>
</dbReference>
<dbReference type="PANTHER" id="PTHR43553:SF24">
    <property type="entry name" value="ENERGY-COUPLING FACTOR TRANSPORTER ATP-BINDING PROTEIN ECFA1"/>
    <property type="match status" value="1"/>
</dbReference>
<dbReference type="PANTHER" id="PTHR43553">
    <property type="entry name" value="HEAVY METAL TRANSPORTER"/>
    <property type="match status" value="1"/>
</dbReference>
<dbReference type="Pfam" id="PF00005">
    <property type="entry name" value="ABC_tran"/>
    <property type="match status" value="1"/>
</dbReference>
<dbReference type="SMART" id="SM00382">
    <property type="entry name" value="AAA"/>
    <property type="match status" value="1"/>
</dbReference>
<dbReference type="SUPFAM" id="SSF52540">
    <property type="entry name" value="P-loop containing nucleoside triphosphate hydrolases"/>
    <property type="match status" value="1"/>
</dbReference>
<dbReference type="PROSITE" id="PS00211">
    <property type="entry name" value="ABC_TRANSPORTER_1"/>
    <property type="match status" value="1"/>
</dbReference>
<dbReference type="PROSITE" id="PS50893">
    <property type="entry name" value="ABC_TRANSPORTER_2"/>
    <property type="match status" value="1"/>
</dbReference>
<dbReference type="PROSITE" id="PS51246">
    <property type="entry name" value="CBIO"/>
    <property type="match status" value="1"/>
</dbReference>
<reference key="1">
    <citation type="journal article" date="2002" name="FEMS Immunol. Med. Microbiol.">
        <title>Identification of ABC transporters in vancomycin-resistant Enterococcus faecium as potential targets for antibody therapy.</title>
        <authorList>
            <person name="Burnie J.P."/>
            <person name="Carter T.L."/>
            <person name="Rigg G.P."/>
            <person name="Hodgetts S.J."/>
            <person name="Donohoe M.S."/>
            <person name="Matthews R.C."/>
        </authorList>
    </citation>
    <scope>NUCLEOTIDE SEQUENCE [GENOMIC DNA]</scope>
</reference>
<evidence type="ECO:0000255" key="1">
    <source>
        <dbReference type="HAMAP-Rule" id="MF_01710"/>
    </source>
</evidence>